<protein>
    <recommendedName>
        <fullName>CMP-N-acetylneuraminate-beta-1,4-galactoside alpha-2,3-sialyltransferase</fullName>
        <ecNumber evidence="2">2.4.3.6</ecNumber>
    </recommendedName>
    <alternativeName>
        <fullName>Beta-galactoside alpha-2,3-sialyltransferase 3</fullName>
        <shortName>Alpha 2,3-ST 3</shortName>
    </alternativeName>
    <alternativeName>
        <fullName>Gal beta-1,3(4) GlcNAc alpha-2,3 sialyltransferase</fullName>
    </alternativeName>
    <alternativeName>
        <fullName>N-acetyllactosaminide alpha-2,3-sialyltransferase</fullName>
    </alternativeName>
    <alternativeName>
        <fullName>ST3Gal III</fullName>
        <shortName>ST3GalIII</shortName>
    </alternativeName>
    <alternativeName>
        <fullName>ST3N</fullName>
    </alternativeName>
    <alternativeName>
        <fullName>Sialyltransferase 6</fullName>
    </alternativeName>
</protein>
<gene>
    <name type="primary">ST3GAL3</name>
    <name type="synonym">SIAT6</name>
</gene>
<comment type="function">
    <text evidence="2">Catalyzes the formation of the NeuAc-alpha-2,3-Gal-beta-1,4-GlcNAc-, NeuAc-alpha-2,3-Gal-beta-1,3-GlcNAc- and NeuAc-alpha-2,3-Gal-beta-1,3-GalNAc- sequences found in terminal carbohydrate groups of glycoproteins and glycolipids. The highest activity is toward Gal-beta-1,3-GlcNAc and the lowest toward Gal-beta-1,3-GalNAc.</text>
</comment>
<comment type="catalytic activity">
    <reaction evidence="2">
        <text>a beta-D-galactosyl-(1-&gt;4)-N-acetyl-beta-D-glucosaminyl derivative + CMP-N-acetyl-beta-neuraminate = an N-acetyl-alpha-neuraminyl-(2-&gt;3)-beta-D-galactosyl-(1-&gt;4)-N-acetyl-beta-D-glucosaminyl derivative + CMP + H(+)</text>
        <dbReference type="Rhea" id="RHEA:52316"/>
        <dbReference type="ChEBI" id="CHEBI:15378"/>
        <dbReference type="ChEBI" id="CHEBI:57812"/>
        <dbReference type="ChEBI" id="CHEBI:60377"/>
        <dbReference type="ChEBI" id="CHEBI:133507"/>
        <dbReference type="ChEBI" id="CHEBI:136545"/>
        <dbReference type="EC" id="2.4.3.6"/>
    </reaction>
</comment>
<comment type="pathway">
    <text>Protein modification; protein glycosylation.</text>
</comment>
<comment type="subcellular location">
    <subcellularLocation>
        <location evidence="1">Golgi apparatus</location>
        <location evidence="1">Golgi stack membrane</location>
        <topology evidence="1">Single-pass type II membrane protein</topology>
    </subcellularLocation>
    <subcellularLocation>
        <location evidence="1">Secreted</location>
    </subcellularLocation>
    <text evidence="1">Membrane-bound form in trans cisternae of Golgi. Secreted into the body fluid.</text>
</comment>
<comment type="PTM">
    <text evidence="1">The soluble form derives from the membrane form by proteolytic processing.</text>
</comment>
<comment type="similarity">
    <text evidence="4">Belongs to the glycosyltransferase 29 family.</text>
</comment>
<keyword id="KW-1015">Disulfide bond</keyword>
<keyword id="KW-0325">Glycoprotein</keyword>
<keyword id="KW-0328">Glycosyltransferase</keyword>
<keyword id="KW-0333">Golgi apparatus</keyword>
<keyword id="KW-0472">Membrane</keyword>
<keyword id="KW-1185">Reference proteome</keyword>
<keyword id="KW-0964">Secreted</keyword>
<keyword id="KW-0735">Signal-anchor</keyword>
<keyword id="KW-0808">Transferase</keyword>
<keyword id="KW-0812">Transmembrane</keyword>
<keyword id="KW-1133">Transmembrane helix</keyword>
<evidence type="ECO:0000250" key="1"/>
<evidence type="ECO:0000250" key="2">
    <source>
        <dbReference type="UniProtKB" id="P97325"/>
    </source>
</evidence>
<evidence type="ECO:0000255" key="3"/>
<evidence type="ECO:0000305" key="4"/>
<dbReference type="EC" id="2.4.3.6" evidence="2"/>
<dbReference type="EMBL" id="AJ626819">
    <property type="protein sequence ID" value="CAF25177.1"/>
    <property type="molecule type" value="mRNA"/>
</dbReference>
<dbReference type="RefSeq" id="NP_001032376.1">
    <property type="nucleotide sequence ID" value="NM_001037299.1"/>
</dbReference>
<dbReference type="RefSeq" id="XP_016807822.1">
    <property type="nucleotide sequence ID" value="XM_016952333.1"/>
</dbReference>
<dbReference type="SMR" id="P61132"/>
<dbReference type="FunCoup" id="P61132">
    <property type="interactions" value="345"/>
</dbReference>
<dbReference type="STRING" id="9598.ENSPTRP00000080776"/>
<dbReference type="CAZy" id="GT29">
    <property type="family name" value="Glycosyltransferase Family 29"/>
</dbReference>
<dbReference type="GlyCosmos" id="P61132">
    <property type="glycosylation" value="2 sites, No reported glycans"/>
</dbReference>
<dbReference type="PaxDb" id="9598-ENSPTRP00000054125"/>
<dbReference type="GeneID" id="456832"/>
<dbReference type="KEGG" id="ptr:456832"/>
<dbReference type="CTD" id="6487"/>
<dbReference type="eggNOG" id="KOG2692">
    <property type="taxonomic scope" value="Eukaryota"/>
</dbReference>
<dbReference type="InParanoid" id="P61132"/>
<dbReference type="UniPathway" id="UPA00378"/>
<dbReference type="Proteomes" id="UP000002277">
    <property type="component" value="Unplaced"/>
</dbReference>
<dbReference type="GO" id="GO:0005576">
    <property type="term" value="C:extracellular region"/>
    <property type="evidence" value="ECO:0007669"/>
    <property type="project" value="UniProtKB-SubCell"/>
</dbReference>
<dbReference type="GO" id="GO:0032580">
    <property type="term" value="C:Golgi cisterna membrane"/>
    <property type="evidence" value="ECO:0007669"/>
    <property type="project" value="UniProtKB-SubCell"/>
</dbReference>
<dbReference type="GO" id="GO:0008118">
    <property type="term" value="F:N-acetyllactosaminide alpha-2,3-sialyltransferase activity"/>
    <property type="evidence" value="ECO:0007669"/>
    <property type="project" value="RHEA"/>
</dbReference>
<dbReference type="GO" id="GO:0008373">
    <property type="term" value="F:sialyltransferase activity"/>
    <property type="evidence" value="ECO:0000318"/>
    <property type="project" value="GO_Central"/>
</dbReference>
<dbReference type="GO" id="GO:0006486">
    <property type="term" value="P:protein glycosylation"/>
    <property type="evidence" value="ECO:0000318"/>
    <property type="project" value="GO_Central"/>
</dbReference>
<dbReference type="CDD" id="cd23981">
    <property type="entry name" value="GT29_ST3GAL3"/>
    <property type="match status" value="1"/>
</dbReference>
<dbReference type="FunFam" id="3.90.1480.20:FF:000003">
    <property type="entry name" value="CMP-N-acetylneuraminate-beta-1,4-galactoside alpha-2,3-sialyltransferase isoform X1"/>
    <property type="match status" value="1"/>
</dbReference>
<dbReference type="Gene3D" id="3.90.1480.20">
    <property type="entry name" value="Glycosyl transferase family 29"/>
    <property type="match status" value="1"/>
</dbReference>
<dbReference type="InterPro" id="IPR001675">
    <property type="entry name" value="Glyco_trans_29"/>
</dbReference>
<dbReference type="InterPro" id="IPR051142">
    <property type="entry name" value="Glycosyltransferase_29"/>
</dbReference>
<dbReference type="InterPro" id="IPR038578">
    <property type="entry name" value="GT29-like_sf"/>
</dbReference>
<dbReference type="InterPro" id="IPR012163">
    <property type="entry name" value="Sialyl_trans"/>
</dbReference>
<dbReference type="PANTHER" id="PTHR13713:SF37">
    <property type="entry name" value="CMP-N-ACETYLNEURAMINATE-BETA-1,4-GALACTOSIDE ALPHA-2,3-SIALYLTRANSFERASE"/>
    <property type="match status" value="1"/>
</dbReference>
<dbReference type="PANTHER" id="PTHR13713">
    <property type="entry name" value="SIALYLTRANSFERASE"/>
    <property type="match status" value="1"/>
</dbReference>
<dbReference type="Pfam" id="PF00777">
    <property type="entry name" value="Glyco_transf_29"/>
    <property type="match status" value="1"/>
</dbReference>
<dbReference type="PIRSF" id="PIRSF005557">
    <property type="entry name" value="Sialyl_trans"/>
    <property type="match status" value="1"/>
</dbReference>
<name>SIAT6_PANTR</name>
<reference key="1">
    <citation type="submission" date="2004-01" db="EMBL/GenBank/DDBJ databases">
        <title>Phylogeny of sialyltransferases.</title>
        <authorList>
            <person name="Harduin-Lepers A."/>
            <person name="Martinez-Duncker I."/>
            <person name="Mollicone R."/>
            <person name="Delannoy P."/>
            <person name="Oriol R."/>
        </authorList>
    </citation>
    <scope>NUCLEOTIDE SEQUENCE [MRNA]</scope>
</reference>
<feature type="chain" id="PRO_0000149268" description="CMP-N-acetylneuraminate-beta-1,4-galactoside alpha-2,3-sialyltransferase">
    <location>
        <begin position="1"/>
        <end position="375"/>
    </location>
</feature>
<feature type="topological domain" description="Cytoplasmic" evidence="3">
    <location>
        <begin position="1"/>
        <end position="8"/>
    </location>
</feature>
<feature type="transmembrane region" description="Helical; Signal-anchor for type II membrane protein" evidence="3">
    <location>
        <begin position="9"/>
        <end position="28"/>
    </location>
</feature>
<feature type="topological domain" description="Lumenal" evidence="3">
    <location>
        <begin position="29"/>
        <end position="375"/>
    </location>
</feature>
<feature type="glycosylation site" description="N-linked (GlcNAc...) asparagine" evidence="3">
    <location>
        <position position="80"/>
    </location>
</feature>
<feature type="glycosylation site" description="N-linked (GlcNAc...) asparagine" evidence="3">
    <location>
        <position position="171"/>
    </location>
</feature>
<feature type="disulfide bond" evidence="1">
    <location>
        <begin position="160"/>
        <end position="314"/>
    </location>
</feature>
<proteinExistence type="evidence at transcript level"/>
<accession>P61132</accession>
<organism>
    <name type="scientific">Pan troglodytes</name>
    <name type="common">Chimpanzee</name>
    <dbReference type="NCBI Taxonomy" id="9598"/>
    <lineage>
        <taxon>Eukaryota</taxon>
        <taxon>Metazoa</taxon>
        <taxon>Chordata</taxon>
        <taxon>Craniata</taxon>
        <taxon>Vertebrata</taxon>
        <taxon>Euteleostomi</taxon>
        <taxon>Mammalia</taxon>
        <taxon>Eutheria</taxon>
        <taxon>Euarchontoglires</taxon>
        <taxon>Primates</taxon>
        <taxon>Haplorrhini</taxon>
        <taxon>Catarrhini</taxon>
        <taxon>Hominidae</taxon>
        <taxon>Pan</taxon>
    </lineage>
</organism>
<sequence length="375" mass="42171">MGLLVFVRNLLLALCLFLVLGFLYYSAWKLHLLQWEEDSNSVVLSFDSAGQTLGSEYDRLGFLLNLDSKLPAELATKYANFSEGACKPGYASALMTAIFPRFSKPAPMFLDDSFRKWARIREFVPPFGIKGQDNLIKAILSVTKEYRLTPALDSLRCRRCIIVGNGGVLANKSLGSRIDDYDIVVRLNSAPVKGFEKDVGSKTTLRITYPEGAMQRPEQYERDSLFVLAGFKWQDFKWLKYIVYKERVSASDGFWKSVATRVPKEPPEIRILNPYFIQEAAFTLIGLPFNNGLMGRGNIPTLGSVAVTMALHGCDEVAVAGFGYDMSTPNAPLHYYETVRMAAIKESWTHNIQREKEFLRKLVKARVITDLSSGI</sequence>